<sequence>MAKMLKLWRLVLLAAFSLLLMAARMPDMKVVPWQQVEVPTQNILLDIAFTGTNPSHGWLVGDKATLLESQDGGLHWQVRKLTALEPEAYLSSISFAGAEGWVVGQPRILLHTLNEGSDWTSIRLSKQLPGEPILIQALGPGAAEMVTNVGAIYRTEDGGQTWHAQVEEPIGAIKNIARGPGGEYLAVSSRGSFYFLYTPESRSWKPYPRESSRRIQNMGFGPNGSAWKLNQGAEIAFTSDFTSGEWSKPLRPGRALSFGYLNAAYQNDHDLWVVGGGGTLIHSPDGGKTWEEAKKLSNIPANFYSIEFFGPDRGFILGQRGTLLRYVGYSNSPS</sequence>
<feature type="signal peptide" evidence="1">
    <location>
        <begin position="1"/>
        <end position="22"/>
    </location>
</feature>
<feature type="chain" id="PRO_0000239682" description="Photosystem II assembly protein Ycf48" evidence="1">
    <location>
        <begin position="23"/>
        <end position="334"/>
    </location>
</feature>
<name>YCF48_SYNJA</name>
<comment type="function">
    <text evidence="1">A factor required for optimal assembly of photosystem II (PSII), acting in the early stages of PSII assembly. Also plays a role in replacement of photodamaged D1 (psbA). Assists YidC in synthesis of chlorophyll-binding proteins.</text>
</comment>
<comment type="subunit">
    <text evidence="1">Part of early PSII assembly complexes which includes D1 (psbA) and PsbI; not found in mature PSII. Binds to the lumenal side of PSII complexes. Interacts with YidC.</text>
</comment>
<comment type="subcellular location">
    <subcellularLocation>
        <location evidence="1">Cellular thylakoid lumen</location>
    </subcellularLocation>
    <text evidence="1">Associated with a PSII precusor complex on the lumenal side of the thylakoid membrane.</text>
</comment>
<comment type="domain">
    <text evidence="1">A 7-bladed beta-propeller torus, about 55 by 55 Angstroms, with a depth of about 25 Angstroms and a central pore.</text>
</comment>
<comment type="similarity">
    <text evidence="1">Belongs to the Ycf48 family.</text>
</comment>
<comment type="sequence caution" evidence="2">
    <conflict type="erroneous initiation">
        <sequence resource="EMBL-CDS" id="ABC99052"/>
    </conflict>
    <text>Truncated N-terminus.</text>
</comment>
<keyword id="KW-0602">Photosynthesis</keyword>
<keyword id="KW-0604">Photosystem II</keyword>
<keyword id="KW-0732">Signal</keyword>
<keyword id="KW-0793">Thylakoid</keyword>
<reference key="1">
    <citation type="journal article" date="2007" name="ISME J.">
        <title>Population level functional diversity in a microbial community revealed by comparative genomic and metagenomic analyses.</title>
        <authorList>
            <person name="Bhaya D."/>
            <person name="Grossman A.R."/>
            <person name="Steunou A.-S."/>
            <person name="Khuri N."/>
            <person name="Cohan F.M."/>
            <person name="Hamamura N."/>
            <person name="Melendrez M.C."/>
            <person name="Bateson M.M."/>
            <person name="Ward D.M."/>
            <person name="Heidelberg J.F."/>
        </authorList>
    </citation>
    <scope>NUCLEOTIDE SEQUENCE [LARGE SCALE GENOMIC DNA]</scope>
    <source>
        <strain>JA-3-3Ab</strain>
    </source>
</reference>
<accession>Q2JW20</accession>
<protein>
    <recommendedName>
        <fullName evidence="1">Photosystem II assembly protein Ycf48</fullName>
    </recommendedName>
</protein>
<gene>
    <name evidence="1" type="primary">ycf48</name>
    <name type="ordered locus">CYA_0848</name>
</gene>
<dbReference type="EMBL" id="CP000239">
    <property type="protein sequence ID" value="ABC99052.1"/>
    <property type="status" value="ALT_INIT"/>
    <property type="molecule type" value="Genomic_DNA"/>
</dbReference>
<dbReference type="RefSeq" id="WP_049749720.1">
    <property type="nucleotide sequence ID" value="NC_007775.1"/>
</dbReference>
<dbReference type="SMR" id="Q2JW20"/>
<dbReference type="STRING" id="321327.CYA_0848"/>
<dbReference type="KEGG" id="cya:CYA_0848"/>
<dbReference type="eggNOG" id="COG4447">
    <property type="taxonomic scope" value="Bacteria"/>
</dbReference>
<dbReference type="HOGENOM" id="CLU_057027_0_0_3"/>
<dbReference type="OrthoDB" id="9813892at2"/>
<dbReference type="Proteomes" id="UP000008818">
    <property type="component" value="Chromosome"/>
</dbReference>
<dbReference type="GO" id="GO:0009523">
    <property type="term" value="C:photosystem II"/>
    <property type="evidence" value="ECO:0007669"/>
    <property type="project" value="UniProtKB-KW"/>
</dbReference>
<dbReference type="GO" id="GO:0031979">
    <property type="term" value="C:plasma membrane-derived thylakoid lumen"/>
    <property type="evidence" value="ECO:0007669"/>
    <property type="project" value="UniProtKB-SubCell"/>
</dbReference>
<dbReference type="GO" id="GO:0015979">
    <property type="term" value="P:photosynthesis"/>
    <property type="evidence" value="ECO:0007669"/>
    <property type="project" value="UniProtKB-KW"/>
</dbReference>
<dbReference type="Gene3D" id="2.130.10.10">
    <property type="entry name" value="YVTN repeat-like/Quinoprotein amine dehydrogenase"/>
    <property type="match status" value="1"/>
</dbReference>
<dbReference type="HAMAP" id="MF_01348">
    <property type="entry name" value="Ycf48"/>
    <property type="match status" value="1"/>
</dbReference>
<dbReference type="InterPro" id="IPR028203">
    <property type="entry name" value="PSII_CF48-like_dom"/>
</dbReference>
<dbReference type="InterPro" id="IPR015943">
    <property type="entry name" value="WD40/YVTN_repeat-like_dom_sf"/>
</dbReference>
<dbReference type="InterPro" id="IPR016705">
    <property type="entry name" value="Ycf48/Hcf136"/>
</dbReference>
<dbReference type="NCBIfam" id="NF010237">
    <property type="entry name" value="PRK13684.1"/>
    <property type="match status" value="1"/>
</dbReference>
<dbReference type="PANTHER" id="PTHR47199">
    <property type="entry name" value="PHOTOSYSTEM II STABILITY/ASSEMBLY FACTOR HCF136, CHLOROPLASTIC"/>
    <property type="match status" value="1"/>
</dbReference>
<dbReference type="PANTHER" id="PTHR47199:SF2">
    <property type="entry name" value="PHOTOSYSTEM II STABILITY_ASSEMBLY FACTOR HCF136, CHLOROPLASTIC"/>
    <property type="match status" value="1"/>
</dbReference>
<dbReference type="Pfam" id="PF14870">
    <property type="entry name" value="PSII_BNR"/>
    <property type="match status" value="1"/>
</dbReference>
<dbReference type="PIRSF" id="PIRSF017875">
    <property type="entry name" value="PSII_HCF136"/>
    <property type="match status" value="1"/>
</dbReference>
<dbReference type="SUPFAM" id="SSF110296">
    <property type="entry name" value="Oligoxyloglucan reducing end-specific cellobiohydrolase"/>
    <property type="match status" value="1"/>
</dbReference>
<evidence type="ECO:0000255" key="1">
    <source>
        <dbReference type="HAMAP-Rule" id="MF_01348"/>
    </source>
</evidence>
<evidence type="ECO:0000305" key="2"/>
<organism>
    <name type="scientific">Synechococcus sp. (strain JA-3-3Ab)</name>
    <name type="common">Cyanobacteria bacterium Yellowstone A-Prime</name>
    <dbReference type="NCBI Taxonomy" id="321327"/>
    <lineage>
        <taxon>Bacteria</taxon>
        <taxon>Bacillati</taxon>
        <taxon>Cyanobacteriota</taxon>
        <taxon>Cyanophyceae</taxon>
        <taxon>Synechococcales</taxon>
        <taxon>Synechococcaceae</taxon>
        <taxon>Synechococcus</taxon>
    </lineage>
</organism>
<proteinExistence type="inferred from homology"/>